<dbReference type="EC" id="2.2.1.7" evidence="1"/>
<dbReference type="EMBL" id="CP001158">
    <property type="protein sequence ID" value="ACL30258.1"/>
    <property type="molecule type" value="Genomic_DNA"/>
</dbReference>
<dbReference type="RefSeq" id="WP_009874416.1">
    <property type="nucleotide sequence ID" value="NC_011834.1"/>
</dbReference>
<dbReference type="SMR" id="B8D7Z3"/>
<dbReference type="KEGG" id="bau:BUAPTUC7_458"/>
<dbReference type="HOGENOM" id="CLU_009227_1_4_6"/>
<dbReference type="UniPathway" id="UPA00064">
    <property type="reaction ID" value="UER00091"/>
</dbReference>
<dbReference type="GO" id="GO:0005829">
    <property type="term" value="C:cytosol"/>
    <property type="evidence" value="ECO:0007669"/>
    <property type="project" value="TreeGrafter"/>
</dbReference>
<dbReference type="GO" id="GO:0008661">
    <property type="term" value="F:1-deoxy-D-xylulose-5-phosphate synthase activity"/>
    <property type="evidence" value="ECO:0007669"/>
    <property type="project" value="UniProtKB-UniRule"/>
</dbReference>
<dbReference type="GO" id="GO:0000287">
    <property type="term" value="F:magnesium ion binding"/>
    <property type="evidence" value="ECO:0007669"/>
    <property type="project" value="UniProtKB-UniRule"/>
</dbReference>
<dbReference type="GO" id="GO:0030976">
    <property type="term" value="F:thiamine pyrophosphate binding"/>
    <property type="evidence" value="ECO:0007669"/>
    <property type="project" value="UniProtKB-UniRule"/>
</dbReference>
<dbReference type="GO" id="GO:0052865">
    <property type="term" value="P:1-deoxy-D-xylulose 5-phosphate biosynthetic process"/>
    <property type="evidence" value="ECO:0007669"/>
    <property type="project" value="UniProtKB-UniPathway"/>
</dbReference>
<dbReference type="GO" id="GO:0019288">
    <property type="term" value="P:isopentenyl diphosphate biosynthetic process, methylerythritol 4-phosphate pathway"/>
    <property type="evidence" value="ECO:0007669"/>
    <property type="project" value="TreeGrafter"/>
</dbReference>
<dbReference type="GO" id="GO:0016114">
    <property type="term" value="P:terpenoid biosynthetic process"/>
    <property type="evidence" value="ECO:0007669"/>
    <property type="project" value="UniProtKB-UniRule"/>
</dbReference>
<dbReference type="GO" id="GO:0009228">
    <property type="term" value="P:thiamine biosynthetic process"/>
    <property type="evidence" value="ECO:0007669"/>
    <property type="project" value="UniProtKB-UniRule"/>
</dbReference>
<dbReference type="CDD" id="cd02007">
    <property type="entry name" value="TPP_DXS"/>
    <property type="match status" value="1"/>
</dbReference>
<dbReference type="CDD" id="cd07033">
    <property type="entry name" value="TPP_PYR_DXS_TK_like"/>
    <property type="match status" value="1"/>
</dbReference>
<dbReference type="FunFam" id="3.40.50.920:FF:000002">
    <property type="entry name" value="1-deoxy-D-xylulose-5-phosphate synthase"/>
    <property type="match status" value="1"/>
</dbReference>
<dbReference type="FunFam" id="3.40.50.970:FF:000005">
    <property type="entry name" value="1-deoxy-D-xylulose-5-phosphate synthase"/>
    <property type="match status" value="1"/>
</dbReference>
<dbReference type="Gene3D" id="3.40.50.920">
    <property type="match status" value="1"/>
</dbReference>
<dbReference type="Gene3D" id="3.40.50.970">
    <property type="match status" value="2"/>
</dbReference>
<dbReference type="HAMAP" id="MF_00315">
    <property type="entry name" value="DXP_synth"/>
    <property type="match status" value="1"/>
</dbReference>
<dbReference type="InterPro" id="IPR005477">
    <property type="entry name" value="Dxylulose-5-P_synthase"/>
</dbReference>
<dbReference type="InterPro" id="IPR029061">
    <property type="entry name" value="THDP-binding"/>
</dbReference>
<dbReference type="InterPro" id="IPR009014">
    <property type="entry name" value="Transketo_C/PFOR_II"/>
</dbReference>
<dbReference type="InterPro" id="IPR005475">
    <property type="entry name" value="Transketolase-like_Pyr-bd"/>
</dbReference>
<dbReference type="InterPro" id="IPR020826">
    <property type="entry name" value="Transketolase_BS"/>
</dbReference>
<dbReference type="InterPro" id="IPR033248">
    <property type="entry name" value="Transketolase_C"/>
</dbReference>
<dbReference type="NCBIfam" id="TIGR00204">
    <property type="entry name" value="dxs"/>
    <property type="match status" value="1"/>
</dbReference>
<dbReference type="NCBIfam" id="NF003933">
    <property type="entry name" value="PRK05444.2-2"/>
    <property type="match status" value="1"/>
</dbReference>
<dbReference type="PANTHER" id="PTHR43322">
    <property type="entry name" value="1-D-DEOXYXYLULOSE 5-PHOSPHATE SYNTHASE-RELATED"/>
    <property type="match status" value="1"/>
</dbReference>
<dbReference type="PANTHER" id="PTHR43322:SF5">
    <property type="entry name" value="1-DEOXY-D-XYLULOSE-5-PHOSPHATE SYNTHASE, CHLOROPLASTIC"/>
    <property type="match status" value="1"/>
</dbReference>
<dbReference type="Pfam" id="PF13292">
    <property type="entry name" value="DXP_synthase_N"/>
    <property type="match status" value="1"/>
</dbReference>
<dbReference type="Pfam" id="PF02779">
    <property type="entry name" value="Transket_pyr"/>
    <property type="match status" value="1"/>
</dbReference>
<dbReference type="Pfam" id="PF02780">
    <property type="entry name" value="Transketolase_C"/>
    <property type="match status" value="1"/>
</dbReference>
<dbReference type="SMART" id="SM00861">
    <property type="entry name" value="Transket_pyr"/>
    <property type="match status" value="1"/>
</dbReference>
<dbReference type="SUPFAM" id="SSF52518">
    <property type="entry name" value="Thiamin diphosphate-binding fold (THDP-binding)"/>
    <property type="match status" value="2"/>
</dbReference>
<dbReference type="SUPFAM" id="SSF52922">
    <property type="entry name" value="TK C-terminal domain-like"/>
    <property type="match status" value="1"/>
</dbReference>
<dbReference type="PROSITE" id="PS00802">
    <property type="entry name" value="TRANSKETOLASE_2"/>
    <property type="match status" value="1"/>
</dbReference>
<keyword id="KW-0414">Isoprene biosynthesis</keyword>
<keyword id="KW-0460">Magnesium</keyword>
<keyword id="KW-0479">Metal-binding</keyword>
<keyword id="KW-0784">Thiamine biosynthesis</keyword>
<keyword id="KW-0786">Thiamine pyrophosphate</keyword>
<keyword id="KW-0808">Transferase</keyword>
<reference key="1">
    <citation type="journal article" date="2009" name="Science">
        <title>The dynamics and time scale of ongoing genomic erosion in symbiotic bacteria.</title>
        <authorList>
            <person name="Moran N.A."/>
            <person name="McLaughlin H.J."/>
            <person name="Sorek R."/>
        </authorList>
    </citation>
    <scope>NUCLEOTIDE SEQUENCE [LARGE SCALE GENOMIC DNA]</scope>
    <source>
        <strain>Tuc7</strain>
    </source>
</reference>
<comment type="function">
    <text evidence="1">Catalyzes the acyloin condensation reaction between C atoms 2 and 3 of pyruvate and glyceraldehyde 3-phosphate to yield 1-deoxy-D-xylulose-5-phosphate (DXP).</text>
</comment>
<comment type="catalytic activity">
    <reaction evidence="1">
        <text>D-glyceraldehyde 3-phosphate + pyruvate + H(+) = 1-deoxy-D-xylulose 5-phosphate + CO2</text>
        <dbReference type="Rhea" id="RHEA:12605"/>
        <dbReference type="ChEBI" id="CHEBI:15361"/>
        <dbReference type="ChEBI" id="CHEBI:15378"/>
        <dbReference type="ChEBI" id="CHEBI:16526"/>
        <dbReference type="ChEBI" id="CHEBI:57792"/>
        <dbReference type="ChEBI" id="CHEBI:59776"/>
        <dbReference type="EC" id="2.2.1.7"/>
    </reaction>
</comment>
<comment type="cofactor">
    <cofactor evidence="1">
        <name>Mg(2+)</name>
        <dbReference type="ChEBI" id="CHEBI:18420"/>
    </cofactor>
    <text evidence="1">Binds 1 Mg(2+) ion per subunit.</text>
</comment>
<comment type="cofactor">
    <cofactor evidence="1">
        <name>thiamine diphosphate</name>
        <dbReference type="ChEBI" id="CHEBI:58937"/>
    </cofactor>
    <text evidence="1">Binds 1 thiamine pyrophosphate per subunit.</text>
</comment>
<comment type="pathway">
    <text evidence="1">Metabolic intermediate biosynthesis; 1-deoxy-D-xylulose 5-phosphate biosynthesis; 1-deoxy-D-xylulose 5-phosphate from D-glyceraldehyde 3-phosphate and pyruvate: step 1/1.</text>
</comment>
<comment type="subunit">
    <text evidence="1">Homodimer.</text>
</comment>
<comment type="similarity">
    <text evidence="1">Belongs to the transketolase family. DXPS subfamily.</text>
</comment>
<name>DXS_BUCAT</name>
<accession>B8D7Z3</accession>
<feature type="chain" id="PRO_1000132925" description="1-deoxy-D-xylulose-5-phosphate synthase">
    <location>
        <begin position="1"/>
        <end position="608"/>
    </location>
</feature>
<feature type="binding site" evidence="1">
    <location>
        <position position="80"/>
    </location>
    <ligand>
        <name>thiamine diphosphate</name>
        <dbReference type="ChEBI" id="CHEBI:58937"/>
    </ligand>
</feature>
<feature type="binding site" evidence="1">
    <location>
        <begin position="121"/>
        <end position="123"/>
    </location>
    <ligand>
        <name>thiamine diphosphate</name>
        <dbReference type="ChEBI" id="CHEBI:58937"/>
    </ligand>
</feature>
<feature type="binding site" evidence="1">
    <location>
        <position position="152"/>
    </location>
    <ligand>
        <name>Mg(2+)</name>
        <dbReference type="ChEBI" id="CHEBI:18420"/>
    </ligand>
</feature>
<feature type="binding site" evidence="1">
    <location>
        <begin position="153"/>
        <end position="154"/>
    </location>
    <ligand>
        <name>thiamine diphosphate</name>
        <dbReference type="ChEBI" id="CHEBI:58937"/>
    </ligand>
</feature>
<feature type="binding site" evidence="1">
    <location>
        <position position="181"/>
    </location>
    <ligand>
        <name>Mg(2+)</name>
        <dbReference type="ChEBI" id="CHEBI:18420"/>
    </ligand>
</feature>
<feature type="binding site" evidence="1">
    <location>
        <position position="181"/>
    </location>
    <ligand>
        <name>thiamine diphosphate</name>
        <dbReference type="ChEBI" id="CHEBI:58937"/>
    </ligand>
</feature>
<feature type="binding site" evidence="1">
    <location>
        <position position="282"/>
    </location>
    <ligand>
        <name>thiamine diphosphate</name>
        <dbReference type="ChEBI" id="CHEBI:58937"/>
    </ligand>
</feature>
<feature type="binding site" evidence="1">
    <location>
        <position position="357"/>
    </location>
    <ligand>
        <name>thiamine diphosphate</name>
        <dbReference type="ChEBI" id="CHEBI:58937"/>
    </ligand>
</feature>
<evidence type="ECO:0000255" key="1">
    <source>
        <dbReference type="HAMAP-Rule" id="MF_00315"/>
    </source>
</evidence>
<organism>
    <name type="scientific">Buchnera aphidicola subsp. Acyrthosiphon pisum (strain Tuc7)</name>
    <dbReference type="NCBI Taxonomy" id="561501"/>
    <lineage>
        <taxon>Bacteria</taxon>
        <taxon>Pseudomonadati</taxon>
        <taxon>Pseudomonadota</taxon>
        <taxon>Gammaproteobacteria</taxon>
        <taxon>Enterobacterales</taxon>
        <taxon>Erwiniaceae</taxon>
        <taxon>Buchnera</taxon>
    </lineage>
</organism>
<proteinExistence type="inferred from homology"/>
<gene>
    <name evidence="1" type="primary">dxs</name>
    <name type="ordered locus">BUAPTUC7_458</name>
</gene>
<protein>
    <recommendedName>
        <fullName evidence="1">1-deoxy-D-xylulose-5-phosphate synthase</fullName>
        <ecNumber evidence="1">2.2.1.7</ecNumber>
    </recommendedName>
    <alternativeName>
        <fullName evidence="1">1-deoxyxylulose-5-phosphate synthase</fullName>
        <shortName evidence="1">DXP synthase</shortName>
        <shortName evidence="1">DXPS</shortName>
    </alternativeName>
</protein>
<sequence length="608" mass="68000">MNFNFNKYPILSFANSVENLRLLSVEQLPQLCFELREYLLDVVSISKGHFASGLGVVEITVALHYVYNTPFDNLLWDTGHQAYPHKILTGRGEKINSIRKKNGLHSFPCREESEYDSLSVGHSSTSISAGLGMSIAAEKEGRNRKTICIIGDGAMTAGMAFEAINHAGEIQSNLLVILNDNQMSISRNVGALNKHLKILRSVQNTQKNRKKIRLLNKKLFFKDKRIQNHSISFNSIFSNLGCKYLGPFDGHNIFSIINTLKKIKNKKGTYLLHLVTKKGKGYLPAELNPIKWHTISSRDSSVSKSLSYSDVFGTWLCEIAAFDKKLIAITPAMCEGSGMVKFSRLFPNQYFDVAIAEQHAVTFAAGLAISGYKPVVSIYSTFFQRAYDQLIHDIALQKLSVLFAVDRAGIVGNDGQTHQGVFDLAYLRCIPGIVIMTPSNENECRQMLYTGYMHNKGPSVVRYPKGYGVGALLMPMNRIPIGKSLIKRRGKKIAILNFGILLHNAYCAAEKLDATLVDMRFVKPLDKSMILKLSSQNKFFITLEEGVISGGAGSAVNEFIMVNKIFLPVLNIGLPDTFIPQGTQEEIRHVYKLDSEGIYKQIFYWLRQ</sequence>